<reference key="1">
    <citation type="submission" date="2006-03" db="EMBL/GenBank/DDBJ databases">
        <title>Complete sequence of chromosome of Psychrobacter cryohalolentis K5.</title>
        <authorList>
            <consortium name="US DOE Joint Genome Institute"/>
            <person name="Copeland A."/>
            <person name="Lucas S."/>
            <person name="Lapidus A."/>
            <person name="Barry K."/>
            <person name="Detter J.C."/>
            <person name="Glavina T."/>
            <person name="Hammon N."/>
            <person name="Israni S."/>
            <person name="Dalin E."/>
            <person name="Tice H."/>
            <person name="Pitluck S."/>
            <person name="Brettin T."/>
            <person name="Bruce D."/>
            <person name="Han C."/>
            <person name="Tapia R."/>
            <person name="Sims D.R."/>
            <person name="Gilna P."/>
            <person name="Schmutz J."/>
            <person name="Larimer F."/>
            <person name="Land M."/>
            <person name="Hauser L."/>
            <person name="Kyrpides N."/>
            <person name="Kim E."/>
            <person name="Richardson P."/>
        </authorList>
    </citation>
    <scope>NUCLEOTIDE SEQUENCE [LARGE SCALE GENOMIC DNA]</scope>
    <source>
        <strain>ATCC BAA-1226 / DSM 17306 / VKM B-2378 / K5</strain>
    </source>
</reference>
<feature type="chain" id="PRO_0000273834" description="Large ribosomal subunit protein uL30">
    <location>
        <begin position="1"/>
        <end position="59"/>
    </location>
</feature>
<keyword id="KW-0687">Ribonucleoprotein</keyword>
<keyword id="KW-0689">Ribosomal protein</keyword>
<comment type="subunit">
    <text evidence="1">Part of the 50S ribosomal subunit.</text>
</comment>
<comment type="similarity">
    <text evidence="1">Belongs to the universal ribosomal protein uL30 family.</text>
</comment>
<name>RL30_PSYCK</name>
<gene>
    <name evidence="1" type="primary">rpmD</name>
    <name type="ordered locus">Pcryo_0502</name>
</gene>
<protein>
    <recommendedName>
        <fullName evidence="1">Large ribosomal subunit protein uL30</fullName>
    </recommendedName>
    <alternativeName>
        <fullName evidence="2">50S ribosomal protein L30</fullName>
    </alternativeName>
</protein>
<sequence length="59" mass="6678">MKKMKVTQFKSGAHRLKSHKACLKGLGLRRINHSVVVEDTPSTRGMVNRVNYLVKVEEA</sequence>
<organism>
    <name type="scientific">Psychrobacter cryohalolentis (strain ATCC BAA-1226 / DSM 17306 / VKM B-2378 / K5)</name>
    <dbReference type="NCBI Taxonomy" id="335284"/>
    <lineage>
        <taxon>Bacteria</taxon>
        <taxon>Pseudomonadati</taxon>
        <taxon>Pseudomonadota</taxon>
        <taxon>Gammaproteobacteria</taxon>
        <taxon>Moraxellales</taxon>
        <taxon>Moraxellaceae</taxon>
        <taxon>Psychrobacter</taxon>
    </lineage>
</organism>
<evidence type="ECO:0000255" key="1">
    <source>
        <dbReference type="HAMAP-Rule" id="MF_01371"/>
    </source>
</evidence>
<evidence type="ECO:0000305" key="2"/>
<proteinExistence type="inferred from homology"/>
<accession>Q1QDG8</accession>
<dbReference type="EMBL" id="CP000323">
    <property type="protein sequence ID" value="ABE74285.1"/>
    <property type="molecule type" value="Genomic_DNA"/>
</dbReference>
<dbReference type="RefSeq" id="WP_011512861.1">
    <property type="nucleotide sequence ID" value="NC_007969.1"/>
</dbReference>
<dbReference type="SMR" id="Q1QDG8"/>
<dbReference type="STRING" id="335284.Pcryo_0502"/>
<dbReference type="KEGG" id="pcr:Pcryo_0502"/>
<dbReference type="eggNOG" id="COG1841">
    <property type="taxonomic scope" value="Bacteria"/>
</dbReference>
<dbReference type="HOGENOM" id="CLU_131047_1_4_6"/>
<dbReference type="Proteomes" id="UP000002425">
    <property type="component" value="Chromosome"/>
</dbReference>
<dbReference type="GO" id="GO:0022625">
    <property type="term" value="C:cytosolic large ribosomal subunit"/>
    <property type="evidence" value="ECO:0007669"/>
    <property type="project" value="TreeGrafter"/>
</dbReference>
<dbReference type="GO" id="GO:0003735">
    <property type="term" value="F:structural constituent of ribosome"/>
    <property type="evidence" value="ECO:0007669"/>
    <property type="project" value="InterPro"/>
</dbReference>
<dbReference type="GO" id="GO:0006412">
    <property type="term" value="P:translation"/>
    <property type="evidence" value="ECO:0007669"/>
    <property type="project" value="UniProtKB-UniRule"/>
</dbReference>
<dbReference type="CDD" id="cd01658">
    <property type="entry name" value="Ribosomal_L30"/>
    <property type="match status" value="1"/>
</dbReference>
<dbReference type="FunFam" id="3.30.1390.20:FF:000001">
    <property type="entry name" value="50S ribosomal protein L30"/>
    <property type="match status" value="1"/>
</dbReference>
<dbReference type="Gene3D" id="3.30.1390.20">
    <property type="entry name" value="Ribosomal protein L30, ferredoxin-like fold domain"/>
    <property type="match status" value="1"/>
</dbReference>
<dbReference type="HAMAP" id="MF_01371_B">
    <property type="entry name" value="Ribosomal_uL30_B"/>
    <property type="match status" value="1"/>
</dbReference>
<dbReference type="InterPro" id="IPR036919">
    <property type="entry name" value="Ribo_uL30_ferredoxin-like_sf"/>
</dbReference>
<dbReference type="InterPro" id="IPR005996">
    <property type="entry name" value="Ribosomal_uL30_bac-type"/>
</dbReference>
<dbReference type="InterPro" id="IPR016082">
    <property type="entry name" value="Ribosomal_uL30_ferredoxin-like"/>
</dbReference>
<dbReference type="NCBIfam" id="TIGR01308">
    <property type="entry name" value="rpmD_bact"/>
    <property type="match status" value="1"/>
</dbReference>
<dbReference type="PANTHER" id="PTHR15892:SF2">
    <property type="entry name" value="LARGE RIBOSOMAL SUBUNIT PROTEIN UL30M"/>
    <property type="match status" value="1"/>
</dbReference>
<dbReference type="PANTHER" id="PTHR15892">
    <property type="entry name" value="MITOCHONDRIAL RIBOSOMAL PROTEIN L30"/>
    <property type="match status" value="1"/>
</dbReference>
<dbReference type="Pfam" id="PF00327">
    <property type="entry name" value="Ribosomal_L30"/>
    <property type="match status" value="1"/>
</dbReference>
<dbReference type="PIRSF" id="PIRSF002211">
    <property type="entry name" value="Ribosomal_L30_bac-type"/>
    <property type="match status" value="1"/>
</dbReference>
<dbReference type="SUPFAM" id="SSF55129">
    <property type="entry name" value="Ribosomal protein L30p/L7e"/>
    <property type="match status" value="1"/>
</dbReference>